<dbReference type="EMBL" id="AY170390">
    <property type="protein sequence ID" value="AAO12051.1"/>
    <property type="molecule type" value="Genomic_DNA"/>
</dbReference>
<dbReference type="EMBL" id="AY170391">
    <property type="protein sequence ID" value="AAO12052.1"/>
    <property type="molecule type" value="mRNA"/>
</dbReference>
<dbReference type="EMBL" id="AB250911">
    <property type="protein sequence ID" value="BAG09362.1"/>
    <property type="molecule type" value="Genomic_DNA"/>
</dbReference>
<dbReference type="PDB" id="7KIY">
    <property type="method" value="EM"/>
    <property type="resolution" value="2.92 A"/>
    <property type="chains" value="B=1-1378"/>
</dbReference>
<dbReference type="PDBsum" id="7KIY"/>
<dbReference type="EMDB" id="EMD-22890"/>
<dbReference type="SMR" id="Q8I060"/>
<dbReference type="VEuPathDB" id="PlasmoDB:PF3D7_0929400"/>
<dbReference type="VEuPathDB" id="PlasmoDB:Pf7G8-2_000277500"/>
<dbReference type="VEuPathDB" id="PlasmoDB:Pf7G8_090034300"/>
<dbReference type="VEuPathDB" id="PlasmoDB:PfCD01_090033800"/>
<dbReference type="VEuPathDB" id="PlasmoDB:PfDd2_090034500"/>
<dbReference type="VEuPathDB" id="PlasmoDB:PfGA01_090033700"/>
<dbReference type="VEuPathDB" id="PlasmoDB:PfGB4_090034400"/>
<dbReference type="VEuPathDB" id="PlasmoDB:PfGN01_090034300"/>
<dbReference type="VEuPathDB" id="PlasmoDB:PfHB3_090034100"/>
<dbReference type="VEuPathDB" id="PlasmoDB:PfIT_090034000"/>
<dbReference type="VEuPathDB" id="PlasmoDB:PfKE01_090033800"/>
<dbReference type="VEuPathDB" id="PlasmoDB:PfKH01_090033700"/>
<dbReference type="VEuPathDB" id="PlasmoDB:PfKH02_090034200"/>
<dbReference type="VEuPathDB" id="PlasmoDB:PfML01_090033900"/>
<dbReference type="VEuPathDB" id="PlasmoDB:PfNF135_090033100"/>
<dbReference type="VEuPathDB" id="PlasmoDB:PfNF166_090033500"/>
<dbReference type="VEuPathDB" id="PlasmoDB:PfNF54_090034600"/>
<dbReference type="VEuPathDB" id="PlasmoDB:PfSD01_090034400"/>
<dbReference type="VEuPathDB" id="PlasmoDB:PfSN01_090034000"/>
<dbReference type="VEuPathDB" id="PlasmoDB:PfTG01_090033800"/>
<dbReference type="GO" id="GO:0031410">
    <property type="term" value="C:cytoplasmic vesicle"/>
    <property type="evidence" value="ECO:0007669"/>
    <property type="project" value="UniProtKB-KW"/>
</dbReference>
<dbReference type="GO" id="GO:0020002">
    <property type="term" value="C:host cell plasma membrane"/>
    <property type="evidence" value="ECO:0007669"/>
    <property type="project" value="UniProtKB-SubCell"/>
</dbReference>
<dbReference type="GO" id="GO:0016020">
    <property type="term" value="C:membrane"/>
    <property type="evidence" value="ECO:0007669"/>
    <property type="project" value="UniProtKB-KW"/>
</dbReference>
<dbReference type="GO" id="GO:0020008">
    <property type="term" value="C:rhoptry"/>
    <property type="evidence" value="ECO:0007669"/>
    <property type="project" value="UniProtKB-SubCell"/>
</dbReference>
<dbReference type="GO" id="GO:0020005">
    <property type="term" value="C:symbiont-containing vacuole membrane"/>
    <property type="evidence" value="ECO:0007669"/>
    <property type="project" value="UniProtKB-SubCell"/>
</dbReference>
<reference evidence="11" key="1">
    <citation type="journal article" date="2003" name="Mol. Biochem. Parasitol.">
        <title>Characterisation of the rhoph2 gene of Plasmodium falciparum and Plasmodium yoelii.</title>
        <authorList>
            <person name="Ling I.T."/>
            <person name="Kaneko O."/>
            <person name="Narum D.L."/>
            <person name="Tsuboi T."/>
            <person name="Howell S."/>
            <person name="Taylor H.M."/>
            <person name="Scott-Finnigan T.J."/>
            <person name="Torii M."/>
            <person name="Holder A.A."/>
        </authorList>
    </citation>
    <scope>NUCLEOTIDE SEQUENCE [GENOMIC DNA]</scope>
</reference>
<reference evidence="12" key="2">
    <citation type="journal article" date="2008" name="Mol. Biochem. Parasitol.">
        <title>Diversity and evolution of the rhoph1/clag multigene family of Plasmodium falciparum.</title>
        <authorList>
            <person name="Iriko H."/>
            <person name="Kaneko O."/>
            <person name="Otsuki H."/>
            <person name="Tsuboi T."/>
            <person name="Su X.Z."/>
            <person name="Tanabe K."/>
            <person name="Torii M."/>
        </authorList>
    </citation>
    <scope>NUCLEOTIDE SEQUENCE [GENOMIC DNA]</scope>
</reference>
<reference evidence="10" key="3">
    <citation type="journal article" date="2017" name="Elife">
        <title>An essential dual-function complex mediates erythrocyte invasion and channel-mediated nutrient uptake in malaria parasites.</title>
        <authorList>
            <person name="Ito D."/>
            <person name="Schureck M.A."/>
            <person name="Desai S.A."/>
        </authorList>
    </citation>
    <scope>FUNCTION</scope>
    <scope>SUBCELLULAR LOCATION</scope>
    <scope>DEVELOPMENTAL STAGE</scope>
    <scope>DISRUPTION PHENOTYPE</scope>
    <source>
        <strain evidence="7">KC5</strain>
    </source>
</reference>
<reference evidence="10" key="4">
    <citation type="journal article" date="2020" name="MBio">
        <title>Live-Cell FRET Reveals that Malaria Nutrient Channel Proteins CLAG3 and RhopH2 Remain Associated throughout Their Tortuous Trafficking.</title>
        <authorList>
            <person name="Ahmad M."/>
            <person name="Manzella-Lapeira J."/>
            <person name="Saggu G."/>
            <person name="Ito D."/>
            <person name="Brzostowski J.A."/>
            <person name="Desai S.A."/>
        </authorList>
    </citation>
    <scope>FUNCTION</scope>
    <scope>SUBCELLULAR LOCATION</scope>
    <scope>DEVELOPMENTAL STAGE</scope>
    <source>
        <strain evidence="8">KC5</strain>
    </source>
</reference>
<reference evidence="13" key="5">
    <citation type="journal article" date="2021" name="Elife">
        <title>Malaria parasites use a soluble RhopH complex for erythrocyte invasion and an integral form for nutrient uptake.</title>
        <authorList>
            <person name="Schureck M.A."/>
            <person name="Darling J.E."/>
            <person name="Merk A."/>
            <person name="Shao J."/>
            <person name="Daggupati G."/>
            <person name="Srinivasan P."/>
            <person name="Olinares P.D.B."/>
            <person name="Rout M.P."/>
            <person name="Chait B.T."/>
            <person name="Wollenberg K."/>
            <person name="Subramaniam S."/>
            <person name="Desai S.A."/>
        </authorList>
    </citation>
    <scope>STRUCTURE BY ELECTRON MICROSCOPY (2.92 ANGSTROMS) IN RHOPH COMPLEX</scope>
    <scope>MASS SPECTROMETRY</scope>
    <scope>IDENTIFICATION IN RHOPH COMPLEX</scope>
    <scope>INTERACTION WITH CLAG3.1/CLAG3.2</scope>
    <scope>SUBCELLULAR LOCATION</scope>
    <scope>DISULFIDE BOND</scope>
    <source>
        <strain evidence="9">KC5</strain>
    </source>
</reference>
<sequence length="1378" mass="162665">MIKVTIFLLLSIFSFNLYGLELNEKVSIKYGAEQGVGSADSNTKLCSDILKYLYMDEYLSEGDKATFEKKCHNVIGNIRNTFSNKNTIKEGNEFLMSILHMKSLYGNNNNNNAGSESDVTLKSLYLSLKGSQNTEGESEVPSDDEINKTIMNFVKFNKYLLDNSNDIKKVHDFLVLTSQSNENLLPNKEKLFEQIVDQIKYFDEYFFASGGKIKVKKGYLKYNFLDIYKQPVCSAYLHLCSRYYESVSIYIRLKKVFNGIPAFLDKNCRKVKGEEFKKLMDMELKHNHIVERFDKYIISDDLYYVNMKVFDLKNVDKIQVSKIDDINNLNIYEHKETMHLSAKNLSRYIDIKKELNDEKAYKQLMSAIRKYVTTLTKADSDITYFVKQLDDEEIERFLIDLNFFLYNGFLRITEDKHLINADDVSPSYINLYRSNNIVALYILKTQYEENKLSEYRAHKFYRRKRVSNITNDMIKKDFTQTNALTNLPNLDNKKTTEYYLKEYENFVENFQPDLHDIMKLQLFFTMAFKDCNVNQNFTETSKKLWFDLLYAYDKFGWFYIHPNEVINSINKTDFVRHVLVSRNFLLKNNDQLTFLETQVAKIVEIINLSLEVDKSPDSLDFSIPMNFFNHKNGYHVMNDDKLKLLTSYEYIDSIANNYFFLSEYKNDVFRTGNNFKLYFNLPNIYSLAYQLFNELAININVITNVPLKKYLKYNASYAYFTLMNMIGKNHDIYSKGSRFVYASYILGLVFFIESHIDIARLKPKDFFFMKQSLPIIDHVYHKDLKTLKKNCTLLTDFMKINKNSQNYSLTHTEEMIKILGLLTVTLWAKEGKKSVYYDDDVSLYRKLMVSCVFNGGETIQEKLANNIEKSCDISQYGIKSKNLKDMIDINLSIHKWNPAEIEKLAYSFVLSCKMQKLMYKPMNVEKLPLEDYYKLSLAPDMVKTYHCYKLGKQAAELLESIILKKKFVRFRVTDAIDVYDFFYIKKVLSSRIKKEYNEFLQDKRAFEKKELETILNNSPFSEEQTMKLINSYECHWFTSYENFRILWMHASSNLGTGTYLKNFFSELWQNIRFLFKSKLKIRDMEYFSGDISQMNLLDYYSPMVHSESHCQEKMQVLFITLRDSKEENRSEIAQKVKSAYYQCKLDYYKNHHSDFIHRIHPNDFLNNKVYVLKQPYYLMSNVPLNNPKKVSRLFVTEGTLEYLLLDKINIPECFGPCTKLHFNKVVIKESKQRIYDMTINNALVPEIQPYNRRKYMTIYINEAYIKNIVSDALTSEEIKRHDIQKGNIKICMGKSTYLTEPILTEEHFNLTHKPVYDFSSVKHNLKVFHMKNEHLVSEDPNDDCFINYPLATINLDISDPYKEISEDLIKNLYILKSS</sequence>
<protein>
    <recommendedName>
        <fullName evidence="10">High molecular weight rhoptry protein 2</fullName>
    </recommendedName>
</protein>
<evidence type="ECO:0000250" key="1">
    <source>
        <dbReference type="UniProtKB" id="A0A2I0BSI4"/>
    </source>
</evidence>
<evidence type="ECO:0000250" key="2">
    <source>
        <dbReference type="UniProtKB" id="C0H571"/>
    </source>
</evidence>
<evidence type="ECO:0000255" key="3"/>
<evidence type="ECO:0000269" key="4">
    <source>
    </source>
</evidence>
<evidence type="ECO:0000269" key="5">
    <source>
    </source>
</evidence>
<evidence type="ECO:0000269" key="6">
    <source>
    </source>
</evidence>
<evidence type="ECO:0000303" key="7">
    <source>
    </source>
</evidence>
<evidence type="ECO:0000303" key="8">
    <source>
    </source>
</evidence>
<evidence type="ECO:0000303" key="9">
    <source>
    </source>
</evidence>
<evidence type="ECO:0000305" key="10"/>
<evidence type="ECO:0000312" key="11">
    <source>
        <dbReference type="EMBL" id="AAO12051.1"/>
    </source>
</evidence>
<evidence type="ECO:0000312" key="12">
    <source>
        <dbReference type="EMBL" id="BAG09362.1"/>
    </source>
</evidence>
<evidence type="ECO:0007744" key="13">
    <source>
        <dbReference type="PDB" id="7KIY"/>
    </source>
</evidence>
<gene>
    <name evidence="9" type="primary">RhopH2</name>
</gene>
<name>RCH2_PLAFA</name>
<organism evidence="11">
    <name type="scientific">Plasmodium falciparum</name>
    <dbReference type="NCBI Taxonomy" id="5833"/>
    <lineage>
        <taxon>Eukaryota</taxon>
        <taxon>Sar</taxon>
        <taxon>Alveolata</taxon>
        <taxon>Apicomplexa</taxon>
        <taxon>Aconoidasida</taxon>
        <taxon>Haemosporida</taxon>
        <taxon>Plasmodiidae</taxon>
        <taxon>Plasmodium</taxon>
        <taxon>Plasmodium (Laverania)</taxon>
    </lineage>
</organism>
<keyword id="KW-0002">3D-structure</keyword>
<keyword id="KW-0963">Cytoplasm</keyword>
<keyword id="KW-0968">Cytoplasmic vesicle</keyword>
<keyword id="KW-1015">Disulfide bond</keyword>
<keyword id="KW-1032">Host cell membrane</keyword>
<keyword id="KW-1035">Host cytoplasm</keyword>
<keyword id="KW-1043">Host membrane</keyword>
<keyword id="KW-0472">Membrane</keyword>
<keyword id="KW-0732">Signal</keyword>
<keyword id="KW-0812">Transmembrane</keyword>
<keyword id="KW-1133">Transmembrane helix</keyword>
<keyword id="KW-0813">Transport</keyword>
<accession>Q8I060</accession>
<feature type="signal peptide" evidence="2">
    <location>
        <begin position="1"/>
        <end position="19"/>
    </location>
</feature>
<feature type="chain" id="PRO_0000460252" description="High molecular weight rhoptry protein 2" evidence="10">
    <location>
        <begin position="20"/>
        <end position="1378"/>
    </location>
</feature>
<feature type="transmembrane region" description="Helical" evidence="3">
    <location>
        <begin position="739"/>
        <end position="759"/>
    </location>
</feature>
<feature type="disulfide bond" evidence="1">
    <location>
        <begin position="46"/>
        <end position="71"/>
    </location>
</feature>
<feature type="disulfide bond" evidence="6 13">
    <location>
        <begin position="233"/>
        <end position="240"/>
    </location>
</feature>
<feature type="disulfide bond" evidence="6 13">
    <location>
        <begin position="791"/>
        <end position="851"/>
    </location>
</feature>
<feature type="disulfide bond" evidence="1">
    <location>
        <begin position="871"/>
        <end position="912"/>
    </location>
</feature>
<feature type="disulfide bond" evidence="1">
    <location>
        <begin position="947"/>
        <end position="1034"/>
    </location>
</feature>
<proteinExistence type="evidence at protein level"/>
<comment type="function">
    <text evidence="2 4 5">Participates in the formation of new permeability pathways in Plasmodium-infected erythrocytes enabling the uptake of nutrients from the blood plasma (PubMed:28221136, PubMed:32900800). Required for maintaining invasion capacity of merozoites (By similarity). Required for parasite growth and proliferation (By similarity).</text>
</comment>
<comment type="subunit">
    <text evidence="6">Component of the RhopH complex, composed of CLAG3.1/CLAG3.2, RhopH2 and RhopH3 with a 1:1:1 subunit stoichiometry (PubMed:33393463). Interacts with CLAG3.1/CLAG3.2 (PubMed:33393463).</text>
</comment>
<comment type="subcellular location">
    <subcellularLocation>
        <location evidence="4 5 6">Host cell membrane</location>
        <topology evidence="3">Single-pass membrane protein</topology>
    </subcellularLocation>
    <subcellularLocation>
        <location evidence="4 5 6">Host cell membrane</location>
        <topology evidence="4">Peripheral membrane protein</topology>
    </subcellularLocation>
    <subcellularLocation>
        <location evidence="4 5">Parasitophorous vacuole membrane</location>
        <topology evidence="3">Single-pass membrane protein</topology>
    </subcellularLocation>
    <subcellularLocation>
        <location evidence="5">Host cytoplasm</location>
    </subcellularLocation>
    <subcellularLocation>
        <location evidence="2">Cytoplasm</location>
    </subcellularLocation>
    <subcellularLocation>
        <location evidence="4 5">Cytoplasmic vesicle</location>
        <location evidence="4 5">Secretory vesicle</location>
        <location evidence="4 5">Rhoptry</location>
    </subcellularLocation>
    <text evidence="4">Export to host cytosol is mediated by the Plasmodium translocon of exported proteins (PTEX) complex.</text>
</comment>
<comment type="developmental stage">
    <text evidence="4 5">Expressed in merozoites (at protein level) (PubMed:32900800). Expressed in ring-stage parasites (at protein level) (PubMed:28221136, PubMed:32900800). Expressed in trophozoites (at protein level) (PubMed:28221136, PubMed:32900800). Expressed in schizonts (at protein level) (PubMed:28221136, PubMed:32900800).</text>
</comment>
<comment type="disruption phenotype">
    <text evidence="4">Knockouts are not viable, suggesting an essential role in asexual blood stages (PubMed:28221136). Conditional knockdown results in co-depletion of CLAG3.2 in schizonts (PubMed:28221136). Co-depletion of CLAG3.2 and RhopH3 in trophozoites (PubMed:28221136). Resistance of infected erythrocytes to sorbitol lysis (PubMed:28221136). No significant effects on the activities of parasitophorous vacuole (PubMed:28221136).</text>
</comment>